<comment type="function">
    <text evidence="2">IGF-binding proteins prolong the half-life of the IGFs and have been shown to either inhibit or stimulate the growth promoting effects of the IGFs on cell culture. They alter the interaction of IGFs with their cell surface receptors. Also exhibits IGF-independent antiproliferative and apoptotic effects mediated by its receptor TMEM219/IGFBP-3R. Promotes testicular germ cell apoptosis.</text>
</comment>
<comment type="subunit">
    <text evidence="1">Interacts with XLKD1. Binds IGF2 more than IGF1. Forms a ternary complex of about 140 to 150 kDa with IGF1 or IGF2 and a 85 kDa glycoprotein (ALS). Interacts with TMEM219 (By similarity).</text>
</comment>
<comment type="subcellular location">
    <subcellularLocation>
        <location>Secreted</location>
    </subcellularLocation>
</comment>
<comment type="PTM">
    <text evidence="2">Phosphorylated by FAM20C in the extracellular medium.</text>
</comment>
<comment type="disruption phenotype">
    <text evidence="7">No effect on baseline apoptosis in the testis but germ cell apoptosis is dramatically reduced following treatment with a gonadotropin-releasing hormone antagonist.</text>
</comment>
<reference key="1">
    <citation type="journal article" date="1994" name="Mol. Cell. Endocrinol.">
        <title>cDNA cloning and mRNA expression of the six mouse insulin-like growth factor binding proteins.</title>
        <authorList>
            <person name="Schuller A.G.P."/>
            <person name="Groffen C."/>
            <person name="van Neck J.W."/>
            <person name="Zwarthoff E.C."/>
            <person name="Drop S.L.S."/>
        </authorList>
    </citation>
    <scope>NUCLEOTIDE SEQUENCE [MRNA]</scope>
    <source>
        <tissue>Liver</tissue>
    </source>
</reference>
<reference key="2">
    <citation type="journal article" date="2009" name="PLoS Biol.">
        <title>Lineage-specific biology revealed by a finished genome assembly of the mouse.</title>
        <authorList>
            <person name="Church D.M."/>
            <person name="Goodstadt L."/>
            <person name="Hillier L.W."/>
            <person name="Zody M.C."/>
            <person name="Goldstein S."/>
            <person name="She X."/>
            <person name="Bult C.J."/>
            <person name="Agarwala R."/>
            <person name="Cherry J.L."/>
            <person name="DiCuccio M."/>
            <person name="Hlavina W."/>
            <person name="Kapustin Y."/>
            <person name="Meric P."/>
            <person name="Maglott D."/>
            <person name="Birtle Z."/>
            <person name="Marques A.C."/>
            <person name="Graves T."/>
            <person name="Zhou S."/>
            <person name="Teague B."/>
            <person name="Potamousis K."/>
            <person name="Churas C."/>
            <person name="Place M."/>
            <person name="Herschleb J."/>
            <person name="Runnheim R."/>
            <person name="Forrest D."/>
            <person name="Amos-Landgraf J."/>
            <person name="Schwartz D.C."/>
            <person name="Cheng Z."/>
            <person name="Lindblad-Toh K."/>
            <person name="Eichler E.E."/>
            <person name="Ponting C.P."/>
        </authorList>
    </citation>
    <scope>NUCLEOTIDE SEQUENCE [LARGE SCALE GENOMIC DNA]</scope>
    <source>
        <strain>C57BL/6J</strain>
    </source>
</reference>
<reference key="3">
    <citation type="journal article" date="2004" name="Genome Res.">
        <title>The status, quality, and expansion of the NIH full-length cDNA project: the Mammalian Gene Collection (MGC).</title>
        <authorList>
            <consortium name="The MGC Project Team"/>
        </authorList>
    </citation>
    <scope>NUCLEOTIDE SEQUENCE [LARGE SCALE MRNA]</scope>
    <source>
        <strain>FVB/N-3</strain>
        <tissue>Mammary tumor</tissue>
    </source>
</reference>
<reference key="4">
    <citation type="journal article" date="2010" name="Endocrinology">
        <title>Opposing roles of insulin-like growth factor binding protein 3 and humanin in the regulation of testicular germ cell apoptosis.</title>
        <authorList>
            <person name="Lue Y."/>
            <person name="Swerdloff R."/>
            <person name="Liu Q."/>
            <person name="Mehta H."/>
            <person name="Hikim A.S."/>
            <person name="Lee K.W."/>
            <person name="Jia Y."/>
            <person name="Hwang D."/>
            <person name="Cobb L.J."/>
            <person name="Cohen P."/>
            <person name="Wang C."/>
        </authorList>
    </citation>
    <scope>DISRUPTION PHENOTYPE</scope>
</reference>
<proteinExistence type="evidence at transcript level"/>
<gene>
    <name type="primary">Igfbp3</name>
    <name type="synonym">Igfbp-3</name>
</gene>
<evidence type="ECO:0000250" key="1"/>
<evidence type="ECO:0000250" key="2">
    <source>
        <dbReference type="UniProtKB" id="P17936"/>
    </source>
</evidence>
<evidence type="ECO:0000255" key="3"/>
<evidence type="ECO:0000255" key="4">
    <source>
        <dbReference type="PROSITE-ProRule" id="PRU00500"/>
    </source>
</evidence>
<evidence type="ECO:0000255" key="5">
    <source>
        <dbReference type="PROSITE-ProRule" id="PRU00653"/>
    </source>
</evidence>
<evidence type="ECO:0000256" key="6">
    <source>
        <dbReference type="SAM" id="MobiDB-lite"/>
    </source>
</evidence>
<evidence type="ECO:0000269" key="7">
    <source>
    </source>
</evidence>
<evidence type="ECO:0000305" key="8"/>
<protein>
    <recommendedName>
        <fullName>Insulin-like growth factor-binding protein 3</fullName>
        <shortName>IBP-3</shortName>
        <shortName>IGF-binding protein 3</shortName>
        <shortName>IGFBP-3</shortName>
    </recommendedName>
</protein>
<sequence length="292" mass="31687">MHPARPALWAAALTALTLLRGPPVARAGAGAVGAGPVVRCEPCDARALSQCAPPPTAPACTELVREPGCGCCLTCALREGDACGVYTERCGTGLRCQPRPAEQYPLRALLNGRGFCANASAAGSLSTYLPSQPAPGNISESEEEHNAGSVESQVVPSTHRVTDSKFHPLHAKMDVIKKGHARDSQRYKVDYESQSTDTQNFSSESKRETEYGPCRREMEDTLNHLKFLNVLSPRGVHIPNCDKKGFYKKKQCRPSKGRKRGFCWCVDKYGQPLPGYDTKGKDDVHCLSVQSQ</sequence>
<keyword id="KW-0053">Apoptosis</keyword>
<keyword id="KW-1015">Disulfide bond</keyword>
<keyword id="KW-0325">Glycoprotein</keyword>
<keyword id="KW-0340">Growth factor binding</keyword>
<keyword id="KW-0597">Phosphoprotein</keyword>
<keyword id="KW-1185">Reference proteome</keyword>
<keyword id="KW-0964">Secreted</keyword>
<keyword id="KW-0732">Signal</keyword>
<dbReference type="EMBL" id="X81581">
    <property type="protein sequence ID" value="CAA57271.1"/>
    <property type="molecule type" value="mRNA"/>
</dbReference>
<dbReference type="EMBL" id="AL607124">
    <property type="status" value="NOT_ANNOTATED_CDS"/>
    <property type="molecule type" value="Genomic_DNA"/>
</dbReference>
<dbReference type="EMBL" id="BC058261">
    <property type="protein sequence ID" value="AAH58261.1"/>
    <property type="molecule type" value="mRNA"/>
</dbReference>
<dbReference type="CCDS" id="CCDS24428.1"/>
<dbReference type="PIR" id="I48602">
    <property type="entry name" value="I48602"/>
</dbReference>
<dbReference type="RefSeq" id="NP_032369.2">
    <property type="nucleotide sequence ID" value="NM_008343.2"/>
</dbReference>
<dbReference type="SMR" id="P47878"/>
<dbReference type="BioGRID" id="200555">
    <property type="interactions" value="1"/>
</dbReference>
<dbReference type="FunCoup" id="P47878">
    <property type="interactions" value="169"/>
</dbReference>
<dbReference type="IntAct" id="P47878">
    <property type="interactions" value="1"/>
</dbReference>
<dbReference type="STRING" id="10090.ENSMUSP00000020702"/>
<dbReference type="MEROPS" id="I31.952"/>
<dbReference type="GlyCosmos" id="P47878">
    <property type="glycosylation" value="3 sites, No reported glycans"/>
</dbReference>
<dbReference type="GlyGen" id="P47878">
    <property type="glycosylation" value="4 sites"/>
</dbReference>
<dbReference type="iPTMnet" id="P47878"/>
<dbReference type="PhosphoSitePlus" id="P47878"/>
<dbReference type="CPTAC" id="non-CPTAC-3300"/>
<dbReference type="jPOST" id="P47878"/>
<dbReference type="PaxDb" id="10090-ENSMUSP00000020702"/>
<dbReference type="PeptideAtlas" id="P47878"/>
<dbReference type="ProteomicsDB" id="267036"/>
<dbReference type="Antibodypedia" id="872">
    <property type="antibodies" value="754 antibodies from 44 providers"/>
</dbReference>
<dbReference type="DNASU" id="16009"/>
<dbReference type="Ensembl" id="ENSMUST00000020702.11">
    <property type="protein sequence ID" value="ENSMUSP00000020702.5"/>
    <property type="gene ID" value="ENSMUSG00000020427.12"/>
</dbReference>
<dbReference type="Ensembl" id="ENSMUST00000135887.3">
    <property type="protein sequence ID" value="ENSMUSP00000131670.2"/>
    <property type="gene ID" value="ENSMUSG00000020427.12"/>
</dbReference>
<dbReference type="GeneID" id="16009"/>
<dbReference type="KEGG" id="mmu:16009"/>
<dbReference type="UCSC" id="uc007hzi.2">
    <property type="organism name" value="mouse"/>
</dbReference>
<dbReference type="AGR" id="MGI:96438"/>
<dbReference type="CTD" id="3486"/>
<dbReference type="MGI" id="MGI:96438">
    <property type="gene designation" value="Igfbp3"/>
</dbReference>
<dbReference type="VEuPathDB" id="HostDB:ENSMUSG00000020427"/>
<dbReference type="eggNOG" id="ENOG502QWC0">
    <property type="taxonomic scope" value="Eukaryota"/>
</dbReference>
<dbReference type="GeneTree" id="ENSGT00940000158092"/>
<dbReference type="HOGENOM" id="CLU_070833_1_1_1"/>
<dbReference type="InParanoid" id="P47878"/>
<dbReference type="OMA" id="CKPLVPD"/>
<dbReference type="OrthoDB" id="6068400at2759"/>
<dbReference type="PhylomeDB" id="P47878"/>
<dbReference type="TreeFam" id="TF331211"/>
<dbReference type="Reactome" id="R-MMU-381426">
    <property type="pathway name" value="Regulation of Insulin-like Growth Factor (IGF) transport and uptake by Insulin-like Growth Factor Binding Proteins (IGFBPs)"/>
</dbReference>
<dbReference type="Reactome" id="R-MMU-6803211">
    <property type="pathway name" value="TP53 Regulates Transcription of Death Receptors and Ligands"/>
</dbReference>
<dbReference type="Reactome" id="R-MMU-8957275">
    <property type="pathway name" value="Post-translational protein phosphorylation"/>
</dbReference>
<dbReference type="BioGRID-ORCS" id="16009">
    <property type="hits" value="2 hits in 78 CRISPR screens"/>
</dbReference>
<dbReference type="PRO" id="PR:P47878"/>
<dbReference type="Proteomes" id="UP000000589">
    <property type="component" value="Chromosome 11"/>
</dbReference>
<dbReference type="RNAct" id="P47878">
    <property type="molecule type" value="protein"/>
</dbReference>
<dbReference type="Bgee" id="ENSMUSG00000020427">
    <property type="expression patterns" value="Expressed in gonadal ridge and 267 other cell types or tissues"/>
</dbReference>
<dbReference type="GO" id="GO:0005615">
    <property type="term" value="C:extracellular space"/>
    <property type="evidence" value="ECO:0000314"/>
    <property type="project" value="MGI"/>
</dbReference>
<dbReference type="GO" id="GO:0042567">
    <property type="term" value="C:insulin-like growth factor ternary complex"/>
    <property type="evidence" value="ECO:0000250"/>
    <property type="project" value="BHF-UCL"/>
</dbReference>
<dbReference type="GO" id="GO:0005634">
    <property type="term" value="C:nucleus"/>
    <property type="evidence" value="ECO:0000266"/>
    <property type="project" value="MGI"/>
</dbReference>
<dbReference type="GO" id="GO:0001968">
    <property type="term" value="F:fibronectin binding"/>
    <property type="evidence" value="ECO:0000314"/>
    <property type="project" value="MGI"/>
</dbReference>
<dbReference type="GO" id="GO:0005520">
    <property type="term" value="F:insulin-like growth factor binding"/>
    <property type="evidence" value="ECO:0000353"/>
    <property type="project" value="MGI"/>
</dbReference>
<dbReference type="GO" id="GO:0031994">
    <property type="term" value="F:insulin-like growth factor I binding"/>
    <property type="evidence" value="ECO:0007669"/>
    <property type="project" value="Ensembl"/>
</dbReference>
<dbReference type="GO" id="GO:0008160">
    <property type="term" value="F:protein tyrosine phosphatase activator activity"/>
    <property type="evidence" value="ECO:0000250"/>
    <property type="project" value="UniProtKB"/>
</dbReference>
<dbReference type="GO" id="GO:0006915">
    <property type="term" value="P:apoptotic process"/>
    <property type="evidence" value="ECO:0007669"/>
    <property type="project" value="UniProtKB-KW"/>
</dbReference>
<dbReference type="GO" id="GO:0000165">
    <property type="term" value="P:MAPK cascade"/>
    <property type="evidence" value="ECO:0000316"/>
    <property type="project" value="MGI"/>
</dbReference>
<dbReference type="GO" id="GO:0008285">
    <property type="term" value="P:negative regulation of cell population proliferation"/>
    <property type="evidence" value="ECO:0000266"/>
    <property type="project" value="MGI"/>
</dbReference>
<dbReference type="GO" id="GO:0014912">
    <property type="term" value="P:negative regulation of smooth muscle cell migration"/>
    <property type="evidence" value="ECO:0007669"/>
    <property type="project" value="Ensembl"/>
</dbReference>
<dbReference type="GO" id="GO:0048662">
    <property type="term" value="P:negative regulation of smooth muscle cell proliferation"/>
    <property type="evidence" value="ECO:0007669"/>
    <property type="project" value="Ensembl"/>
</dbReference>
<dbReference type="GO" id="GO:0001649">
    <property type="term" value="P:osteoblast differentiation"/>
    <property type="evidence" value="ECO:0000270"/>
    <property type="project" value="BHF-UCL"/>
</dbReference>
<dbReference type="GO" id="GO:0043065">
    <property type="term" value="P:positive regulation of apoptotic process"/>
    <property type="evidence" value="ECO:0000250"/>
    <property type="project" value="UniProtKB"/>
</dbReference>
<dbReference type="GO" id="GO:0043568">
    <property type="term" value="P:positive regulation of insulin-like growth factor receptor signaling pathway"/>
    <property type="evidence" value="ECO:0000316"/>
    <property type="project" value="MGI"/>
</dbReference>
<dbReference type="GO" id="GO:0043410">
    <property type="term" value="P:positive regulation of MAPK cascade"/>
    <property type="evidence" value="ECO:0000316"/>
    <property type="project" value="MGI"/>
</dbReference>
<dbReference type="GO" id="GO:0045663">
    <property type="term" value="P:positive regulation of myoblast differentiation"/>
    <property type="evidence" value="ECO:0000250"/>
    <property type="project" value="UniProtKB"/>
</dbReference>
<dbReference type="GO" id="GO:0001558">
    <property type="term" value="P:regulation of cell growth"/>
    <property type="evidence" value="ECO:0000316"/>
    <property type="project" value="MGI"/>
</dbReference>
<dbReference type="GO" id="GO:0010906">
    <property type="term" value="P:regulation of glucose metabolic process"/>
    <property type="evidence" value="ECO:0000316"/>
    <property type="project" value="MGI"/>
</dbReference>
<dbReference type="GO" id="GO:0040008">
    <property type="term" value="P:regulation of growth"/>
    <property type="evidence" value="ECO:0000316"/>
    <property type="project" value="MGI"/>
</dbReference>
<dbReference type="GO" id="GO:0044342">
    <property type="term" value="P:type B pancreatic cell proliferation"/>
    <property type="evidence" value="ECO:0000316"/>
    <property type="project" value="MGI"/>
</dbReference>
<dbReference type="CDD" id="cd00191">
    <property type="entry name" value="TY"/>
    <property type="match status" value="1"/>
</dbReference>
<dbReference type="FunFam" id="4.10.40.20:FF:000001">
    <property type="entry name" value="Insulin-like growth factor binding protein 5"/>
    <property type="match status" value="1"/>
</dbReference>
<dbReference type="FunFam" id="4.10.800.10:FF:000005">
    <property type="entry name" value="Putative insulin-like growth factor-binding protein 5"/>
    <property type="match status" value="1"/>
</dbReference>
<dbReference type="Gene3D" id="4.10.40.20">
    <property type="match status" value="1"/>
</dbReference>
<dbReference type="Gene3D" id="4.10.800.10">
    <property type="entry name" value="Thyroglobulin type-1"/>
    <property type="match status" value="1"/>
</dbReference>
<dbReference type="InterPro" id="IPR009030">
    <property type="entry name" value="Growth_fac_rcpt_cys_sf"/>
</dbReference>
<dbReference type="InterPro" id="IPR012211">
    <property type="entry name" value="IGFBP-3"/>
</dbReference>
<dbReference type="InterPro" id="IPR000867">
    <property type="entry name" value="IGFBP-like"/>
</dbReference>
<dbReference type="InterPro" id="IPR022321">
    <property type="entry name" value="IGFBP_1-6_chordata"/>
</dbReference>
<dbReference type="InterPro" id="IPR017891">
    <property type="entry name" value="Insulin_GF-bd_Cys-rich_CS"/>
</dbReference>
<dbReference type="InterPro" id="IPR000716">
    <property type="entry name" value="Thyroglobulin_1"/>
</dbReference>
<dbReference type="InterPro" id="IPR036857">
    <property type="entry name" value="Thyroglobulin_1_sf"/>
</dbReference>
<dbReference type="PANTHER" id="PTHR11551">
    <property type="entry name" value="INSULIN-LIKE GROWTH FACTOR BINDING PROTEIN"/>
    <property type="match status" value="1"/>
</dbReference>
<dbReference type="PANTHER" id="PTHR11551:SF3">
    <property type="entry name" value="INSULIN-LIKE GROWTH FACTOR-BINDING PROTEIN 3"/>
    <property type="match status" value="1"/>
</dbReference>
<dbReference type="Pfam" id="PF00219">
    <property type="entry name" value="IGFBP"/>
    <property type="match status" value="1"/>
</dbReference>
<dbReference type="Pfam" id="PF00086">
    <property type="entry name" value="Thyroglobulin_1"/>
    <property type="match status" value="1"/>
</dbReference>
<dbReference type="PRINTS" id="PR01976">
    <property type="entry name" value="IGFBPFAMILY"/>
</dbReference>
<dbReference type="PRINTS" id="PR01979">
    <property type="entry name" value="IGFBPFAMILY3"/>
</dbReference>
<dbReference type="SMART" id="SM00121">
    <property type="entry name" value="IB"/>
    <property type="match status" value="1"/>
</dbReference>
<dbReference type="SMART" id="SM00211">
    <property type="entry name" value="TY"/>
    <property type="match status" value="1"/>
</dbReference>
<dbReference type="SUPFAM" id="SSF57184">
    <property type="entry name" value="Growth factor receptor domain"/>
    <property type="match status" value="1"/>
</dbReference>
<dbReference type="SUPFAM" id="SSF57610">
    <property type="entry name" value="Thyroglobulin type-1 domain"/>
    <property type="match status" value="1"/>
</dbReference>
<dbReference type="PROSITE" id="PS00222">
    <property type="entry name" value="IGFBP_N_1"/>
    <property type="match status" value="1"/>
</dbReference>
<dbReference type="PROSITE" id="PS51323">
    <property type="entry name" value="IGFBP_N_2"/>
    <property type="match status" value="1"/>
</dbReference>
<dbReference type="PROSITE" id="PS00484">
    <property type="entry name" value="THYROGLOBULIN_1_1"/>
    <property type="match status" value="1"/>
</dbReference>
<dbReference type="PROSITE" id="PS51162">
    <property type="entry name" value="THYROGLOBULIN_1_2"/>
    <property type="match status" value="1"/>
</dbReference>
<name>IBP3_MOUSE</name>
<feature type="signal peptide" evidence="1">
    <location>
        <begin position="1"/>
        <end position="27"/>
    </location>
</feature>
<feature type="chain" id="PRO_0000014379" description="Insulin-like growth factor-binding protein 3">
    <location>
        <begin position="28"/>
        <end position="292"/>
    </location>
</feature>
<feature type="domain" description="IGFBP N-terminal" evidence="5">
    <location>
        <begin position="36"/>
        <end position="119"/>
    </location>
</feature>
<feature type="domain" description="Thyroglobulin type-1" evidence="4">
    <location>
        <begin position="211"/>
        <end position="286"/>
    </location>
</feature>
<feature type="region of interest" description="Disordered" evidence="6">
    <location>
        <begin position="128"/>
        <end position="152"/>
    </location>
</feature>
<feature type="region of interest" description="Disordered" evidence="6">
    <location>
        <begin position="178"/>
        <end position="212"/>
    </location>
</feature>
<feature type="compositionally biased region" description="Basic and acidic residues" evidence="6">
    <location>
        <begin position="178"/>
        <end position="191"/>
    </location>
</feature>
<feature type="compositionally biased region" description="Polar residues" evidence="6">
    <location>
        <begin position="192"/>
        <end position="203"/>
    </location>
</feature>
<feature type="modified residue" description="Phosphoserine" evidence="2">
    <location>
        <position position="149"/>
    </location>
</feature>
<feature type="modified residue" description="Phosphoserine" evidence="2">
    <location>
        <position position="202"/>
    </location>
</feature>
<feature type="glycosylation site" description="N-linked (GlcNAc...) asparagine" evidence="3">
    <location>
        <position position="118"/>
    </location>
</feature>
<feature type="glycosylation site" description="N-linked (GlcNAc...) asparagine" evidence="3">
    <location>
        <position position="137"/>
    </location>
</feature>
<feature type="glycosylation site" description="N-linked (GlcNAc...) asparagine" evidence="3">
    <location>
        <position position="200"/>
    </location>
</feature>
<feature type="disulfide bond" evidence="5">
    <location>
        <begin position="40"/>
        <end position="69"/>
    </location>
</feature>
<feature type="disulfide bond" evidence="5">
    <location>
        <begin position="43"/>
        <end position="71"/>
    </location>
</feature>
<feature type="disulfide bond" evidence="5">
    <location>
        <begin position="51"/>
        <end position="72"/>
    </location>
</feature>
<feature type="disulfide bond" evidence="5">
    <location>
        <begin position="60"/>
        <end position="75"/>
    </location>
</feature>
<feature type="disulfide bond" evidence="5">
    <location>
        <begin position="83"/>
        <end position="96"/>
    </location>
</feature>
<feature type="disulfide bond" evidence="5">
    <location>
        <begin position="90"/>
        <end position="116"/>
    </location>
</feature>
<feature type="disulfide bond" evidence="4">
    <location>
        <begin position="214"/>
        <end position="241"/>
    </location>
</feature>
<feature type="disulfide bond" evidence="4">
    <location>
        <begin position="252"/>
        <end position="263"/>
    </location>
</feature>
<feature type="disulfide bond" evidence="4">
    <location>
        <begin position="265"/>
        <end position="286"/>
    </location>
</feature>
<feature type="sequence conflict" description="In Ref. 1; CAA57271." evidence="8" ref="1">
    <original>RAG</original>
    <variation>ELA</variation>
    <location>
        <begin position="26"/>
        <end position="28"/>
    </location>
</feature>
<feature type="sequence conflict" description="In Ref. 1; CAA57271." evidence="8" ref="1">
    <location>
        <position position="34"/>
    </location>
</feature>
<feature type="sequence conflict" description="In Ref. 1; CAA57271." evidence="8" ref="1">
    <original>L</original>
    <variation>V</variation>
    <location>
        <position position="48"/>
    </location>
</feature>
<feature type="sequence conflict" description="In Ref. 1; CAA57271." evidence="8" ref="1">
    <original>Q</original>
    <variation>R</variation>
    <location>
        <position position="251"/>
    </location>
</feature>
<feature type="sequence conflict" description="In Ref. 1; CAA57271." evidence="8" ref="1">
    <original>RG</original>
    <variation>QS</variation>
    <location>
        <begin position="260"/>
        <end position="261"/>
    </location>
</feature>
<feature type="sequence conflict" description="In Ref. 1; CAA57271." evidence="8" ref="1">
    <original>P</original>
    <variation>R</variation>
    <location>
        <position position="272"/>
    </location>
</feature>
<accession>P47878</accession>
<accession>Q6PE62</accession>
<organism>
    <name type="scientific">Mus musculus</name>
    <name type="common">Mouse</name>
    <dbReference type="NCBI Taxonomy" id="10090"/>
    <lineage>
        <taxon>Eukaryota</taxon>
        <taxon>Metazoa</taxon>
        <taxon>Chordata</taxon>
        <taxon>Craniata</taxon>
        <taxon>Vertebrata</taxon>
        <taxon>Euteleostomi</taxon>
        <taxon>Mammalia</taxon>
        <taxon>Eutheria</taxon>
        <taxon>Euarchontoglires</taxon>
        <taxon>Glires</taxon>
        <taxon>Rodentia</taxon>
        <taxon>Myomorpha</taxon>
        <taxon>Muroidea</taxon>
        <taxon>Muridae</taxon>
        <taxon>Murinae</taxon>
        <taxon>Mus</taxon>
        <taxon>Mus</taxon>
    </lineage>
</organism>